<keyword id="KW-0963">Cytoplasm</keyword>
<keyword id="KW-0251">Elongation factor</keyword>
<keyword id="KW-0342">GTP-binding</keyword>
<keyword id="KW-0378">Hydrolase</keyword>
<keyword id="KW-0460">Magnesium</keyword>
<keyword id="KW-0479">Metal-binding</keyword>
<keyword id="KW-0547">Nucleotide-binding</keyword>
<keyword id="KW-0648">Protein biosynthesis</keyword>
<sequence length="394" mass="43092">MAKEKFDRSKEHANIGTIGHVDHGKTTLTAAIATVLAKNGDTVAQSYDMIDNAPEEKERGITINTAHIEYQTDKRHYAHVDCPGHADYVKNMITGAAQMDGGILVVSAADGPMPQTREHILLSRNVGVPALVVFLNKVDMVDDEELLELVEMEVRDLLSEYDFPGDDVPVIAGSALKALEGDAQYEEKILELMQAVDDYIPTPERDSDKPFMMPVEDVFSITGRGTVATGRVERGQIKVGEEVEIIGIHDTSKTTVTGVEMFRKLLDYAEAGDNIGALLRGVAREDVQRGQVLAAPGSITPHTKFKADVYVLSKDEGGRHTPFFTNYRPQFYFRTTDVTGVVNLPEGTEMVMPGDNVEMTVELIAPIAIEDGTRFSIREGGRTVGSGVVTEIIE</sequence>
<proteinExistence type="inferred from homology"/>
<name>EFTU_STAHJ</name>
<evidence type="ECO:0000250" key="1"/>
<evidence type="ECO:0000255" key="2">
    <source>
        <dbReference type="HAMAP-Rule" id="MF_00118"/>
    </source>
</evidence>
<protein>
    <recommendedName>
        <fullName evidence="2">Elongation factor Tu</fullName>
        <shortName evidence="2">EF-Tu</shortName>
        <ecNumber evidence="2">3.6.5.3</ecNumber>
    </recommendedName>
</protein>
<dbReference type="EC" id="3.6.5.3" evidence="2"/>
<dbReference type="EMBL" id="AP006716">
    <property type="protein sequence ID" value="BAE05768.1"/>
    <property type="molecule type" value="Genomic_DNA"/>
</dbReference>
<dbReference type="RefSeq" id="WP_011276713.1">
    <property type="nucleotide sequence ID" value="NC_007168.1"/>
</dbReference>
<dbReference type="SMR" id="Q4L3K9"/>
<dbReference type="GeneID" id="93781673"/>
<dbReference type="KEGG" id="sha:SH2459"/>
<dbReference type="eggNOG" id="COG0050">
    <property type="taxonomic scope" value="Bacteria"/>
</dbReference>
<dbReference type="HOGENOM" id="CLU_007265_0_0_9"/>
<dbReference type="OrthoDB" id="9804504at2"/>
<dbReference type="Proteomes" id="UP000000543">
    <property type="component" value="Chromosome"/>
</dbReference>
<dbReference type="GO" id="GO:0005829">
    <property type="term" value="C:cytosol"/>
    <property type="evidence" value="ECO:0007669"/>
    <property type="project" value="TreeGrafter"/>
</dbReference>
<dbReference type="GO" id="GO:0005525">
    <property type="term" value="F:GTP binding"/>
    <property type="evidence" value="ECO:0007669"/>
    <property type="project" value="UniProtKB-UniRule"/>
</dbReference>
<dbReference type="GO" id="GO:0003924">
    <property type="term" value="F:GTPase activity"/>
    <property type="evidence" value="ECO:0007669"/>
    <property type="project" value="InterPro"/>
</dbReference>
<dbReference type="GO" id="GO:0003746">
    <property type="term" value="F:translation elongation factor activity"/>
    <property type="evidence" value="ECO:0007669"/>
    <property type="project" value="UniProtKB-UniRule"/>
</dbReference>
<dbReference type="CDD" id="cd01884">
    <property type="entry name" value="EF_Tu"/>
    <property type="match status" value="1"/>
</dbReference>
<dbReference type="CDD" id="cd03697">
    <property type="entry name" value="EFTU_II"/>
    <property type="match status" value="1"/>
</dbReference>
<dbReference type="CDD" id="cd03707">
    <property type="entry name" value="EFTU_III"/>
    <property type="match status" value="1"/>
</dbReference>
<dbReference type="FunFam" id="2.40.30.10:FF:000001">
    <property type="entry name" value="Elongation factor Tu"/>
    <property type="match status" value="1"/>
</dbReference>
<dbReference type="FunFam" id="3.40.50.300:FF:000003">
    <property type="entry name" value="Elongation factor Tu"/>
    <property type="match status" value="1"/>
</dbReference>
<dbReference type="Gene3D" id="3.40.50.300">
    <property type="entry name" value="P-loop containing nucleotide triphosphate hydrolases"/>
    <property type="match status" value="1"/>
</dbReference>
<dbReference type="Gene3D" id="2.40.30.10">
    <property type="entry name" value="Translation factors"/>
    <property type="match status" value="2"/>
</dbReference>
<dbReference type="HAMAP" id="MF_00118_B">
    <property type="entry name" value="EF_Tu_B"/>
    <property type="match status" value="1"/>
</dbReference>
<dbReference type="InterPro" id="IPR041709">
    <property type="entry name" value="EF-Tu_GTP-bd"/>
</dbReference>
<dbReference type="InterPro" id="IPR050055">
    <property type="entry name" value="EF-Tu_GTPase"/>
</dbReference>
<dbReference type="InterPro" id="IPR004161">
    <property type="entry name" value="EFTu-like_2"/>
</dbReference>
<dbReference type="InterPro" id="IPR033720">
    <property type="entry name" value="EFTU_2"/>
</dbReference>
<dbReference type="InterPro" id="IPR031157">
    <property type="entry name" value="G_TR_CS"/>
</dbReference>
<dbReference type="InterPro" id="IPR027417">
    <property type="entry name" value="P-loop_NTPase"/>
</dbReference>
<dbReference type="InterPro" id="IPR005225">
    <property type="entry name" value="Small_GTP-bd"/>
</dbReference>
<dbReference type="InterPro" id="IPR000795">
    <property type="entry name" value="T_Tr_GTP-bd_dom"/>
</dbReference>
<dbReference type="InterPro" id="IPR009000">
    <property type="entry name" value="Transl_B-barrel_sf"/>
</dbReference>
<dbReference type="InterPro" id="IPR009001">
    <property type="entry name" value="Transl_elong_EF1A/Init_IF2_C"/>
</dbReference>
<dbReference type="InterPro" id="IPR004541">
    <property type="entry name" value="Transl_elong_EFTu/EF1A_bac/org"/>
</dbReference>
<dbReference type="InterPro" id="IPR004160">
    <property type="entry name" value="Transl_elong_EFTu/EF1A_C"/>
</dbReference>
<dbReference type="NCBIfam" id="TIGR00485">
    <property type="entry name" value="EF-Tu"/>
    <property type="match status" value="1"/>
</dbReference>
<dbReference type="NCBIfam" id="NF000766">
    <property type="entry name" value="PRK00049.1"/>
    <property type="match status" value="1"/>
</dbReference>
<dbReference type="NCBIfam" id="NF009372">
    <property type="entry name" value="PRK12735.1"/>
    <property type="match status" value="1"/>
</dbReference>
<dbReference type="NCBIfam" id="NF009373">
    <property type="entry name" value="PRK12736.1"/>
    <property type="match status" value="1"/>
</dbReference>
<dbReference type="NCBIfam" id="TIGR00231">
    <property type="entry name" value="small_GTP"/>
    <property type="match status" value="1"/>
</dbReference>
<dbReference type="PANTHER" id="PTHR43721:SF22">
    <property type="entry name" value="ELONGATION FACTOR TU, MITOCHONDRIAL"/>
    <property type="match status" value="1"/>
</dbReference>
<dbReference type="PANTHER" id="PTHR43721">
    <property type="entry name" value="ELONGATION FACTOR TU-RELATED"/>
    <property type="match status" value="1"/>
</dbReference>
<dbReference type="Pfam" id="PF00009">
    <property type="entry name" value="GTP_EFTU"/>
    <property type="match status" value="1"/>
</dbReference>
<dbReference type="Pfam" id="PF03144">
    <property type="entry name" value="GTP_EFTU_D2"/>
    <property type="match status" value="1"/>
</dbReference>
<dbReference type="Pfam" id="PF03143">
    <property type="entry name" value="GTP_EFTU_D3"/>
    <property type="match status" value="1"/>
</dbReference>
<dbReference type="PRINTS" id="PR00315">
    <property type="entry name" value="ELONGATNFCT"/>
</dbReference>
<dbReference type="SUPFAM" id="SSF50465">
    <property type="entry name" value="EF-Tu/eEF-1alpha/eIF2-gamma C-terminal domain"/>
    <property type="match status" value="1"/>
</dbReference>
<dbReference type="SUPFAM" id="SSF52540">
    <property type="entry name" value="P-loop containing nucleoside triphosphate hydrolases"/>
    <property type="match status" value="1"/>
</dbReference>
<dbReference type="SUPFAM" id="SSF50447">
    <property type="entry name" value="Translation proteins"/>
    <property type="match status" value="1"/>
</dbReference>
<dbReference type="PROSITE" id="PS00301">
    <property type="entry name" value="G_TR_1"/>
    <property type="match status" value="1"/>
</dbReference>
<dbReference type="PROSITE" id="PS51722">
    <property type="entry name" value="G_TR_2"/>
    <property type="match status" value="1"/>
</dbReference>
<gene>
    <name evidence="2" type="primary">tuf</name>
    <name type="ordered locus">SH2459</name>
</gene>
<comment type="function">
    <text evidence="2">GTP hydrolase that promotes the GTP-dependent binding of aminoacyl-tRNA to the A-site of ribosomes during protein biosynthesis.</text>
</comment>
<comment type="catalytic activity">
    <reaction evidence="2">
        <text>GTP + H2O = GDP + phosphate + H(+)</text>
        <dbReference type="Rhea" id="RHEA:19669"/>
        <dbReference type="ChEBI" id="CHEBI:15377"/>
        <dbReference type="ChEBI" id="CHEBI:15378"/>
        <dbReference type="ChEBI" id="CHEBI:37565"/>
        <dbReference type="ChEBI" id="CHEBI:43474"/>
        <dbReference type="ChEBI" id="CHEBI:58189"/>
        <dbReference type="EC" id="3.6.5.3"/>
    </reaction>
    <physiologicalReaction direction="left-to-right" evidence="2">
        <dbReference type="Rhea" id="RHEA:19670"/>
    </physiologicalReaction>
</comment>
<comment type="subunit">
    <text evidence="2">Monomer.</text>
</comment>
<comment type="subcellular location">
    <subcellularLocation>
        <location evidence="2">Cytoplasm</location>
    </subcellularLocation>
</comment>
<comment type="similarity">
    <text evidence="2">Belongs to the TRAFAC class translation factor GTPase superfamily. Classic translation factor GTPase family. EF-Tu/EF-1A subfamily.</text>
</comment>
<feature type="chain" id="PRO_1000015752" description="Elongation factor Tu">
    <location>
        <begin position="1"/>
        <end position="394"/>
    </location>
</feature>
<feature type="domain" description="tr-type G">
    <location>
        <begin position="10"/>
        <end position="204"/>
    </location>
</feature>
<feature type="region of interest" description="G1" evidence="1">
    <location>
        <begin position="19"/>
        <end position="26"/>
    </location>
</feature>
<feature type="region of interest" description="G2" evidence="1">
    <location>
        <begin position="60"/>
        <end position="64"/>
    </location>
</feature>
<feature type="region of interest" description="G3" evidence="1">
    <location>
        <begin position="81"/>
        <end position="84"/>
    </location>
</feature>
<feature type="region of interest" description="G4" evidence="1">
    <location>
        <begin position="136"/>
        <end position="139"/>
    </location>
</feature>
<feature type="region of interest" description="G5" evidence="1">
    <location>
        <begin position="174"/>
        <end position="176"/>
    </location>
</feature>
<feature type="binding site" evidence="2">
    <location>
        <begin position="19"/>
        <end position="26"/>
    </location>
    <ligand>
        <name>GTP</name>
        <dbReference type="ChEBI" id="CHEBI:37565"/>
    </ligand>
</feature>
<feature type="binding site" evidence="2">
    <location>
        <position position="26"/>
    </location>
    <ligand>
        <name>Mg(2+)</name>
        <dbReference type="ChEBI" id="CHEBI:18420"/>
    </ligand>
</feature>
<feature type="binding site" evidence="2">
    <location>
        <begin position="81"/>
        <end position="85"/>
    </location>
    <ligand>
        <name>GTP</name>
        <dbReference type="ChEBI" id="CHEBI:37565"/>
    </ligand>
</feature>
<feature type="binding site" evidence="2">
    <location>
        <begin position="136"/>
        <end position="139"/>
    </location>
    <ligand>
        <name>GTP</name>
        <dbReference type="ChEBI" id="CHEBI:37565"/>
    </ligand>
</feature>
<organism>
    <name type="scientific">Staphylococcus haemolyticus (strain JCSC1435)</name>
    <dbReference type="NCBI Taxonomy" id="279808"/>
    <lineage>
        <taxon>Bacteria</taxon>
        <taxon>Bacillati</taxon>
        <taxon>Bacillota</taxon>
        <taxon>Bacilli</taxon>
        <taxon>Bacillales</taxon>
        <taxon>Staphylococcaceae</taxon>
        <taxon>Staphylococcus</taxon>
    </lineage>
</organism>
<accession>Q4L3K9</accession>
<reference key="1">
    <citation type="journal article" date="2005" name="J. Bacteriol.">
        <title>Whole-genome sequencing of Staphylococcus haemolyticus uncovers the extreme plasticity of its genome and the evolution of human-colonizing staphylococcal species.</title>
        <authorList>
            <person name="Takeuchi F."/>
            <person name="Watanabe S."/>
            <person name="Baba T."/>
            <person name="Yuzawa H."/>
            <person name="Ito T."/>
            <person name="Morimoto Y."/>
            <person name="Kuroda M."/>
            <person name="Cui L."/>
            <person name="Takahashi M."/>
            <person name="Ankai A."/>
            <person name="Baba S."/>
            <person name="Fukui S."/>
            <person name="Lee J.C."/>
            <person name="Hiramatsu K."/>
        </authorList>
    </citation>
    <scope>NUCLEOTIDE SEQUENCE [LARGE SCALE GENOMIC DNA]</scope>
    <source>
        <strain>JCSC1435</strain>
    </source>
</reference>